<name>NIKE_STAAM</name>
<organism>
    <name type="scientific">Staphylococcus aureus (strain Mu50 / ATCC 700699)</name>
    <dbReference type="NCBI Taxonomy" id="158878"/>
    <lineage>
        <taxon>Bacteria</taxon>
        <taxon>Bacillati</taxon>
        <taxon>Bacillota</taxon>
        <taxon>Bacilli</taxon>
        <taxon>Bacillales</taxon>
        <taxon>Staphylococcaceae</taxon>
        <taxon>Staphylococcus</taxon>
    </lineage>
</organism>
<evidence type="ECO:0000250" key="1">
    <source>
        <dbReference type="UniProtKB" id="Q2FYQ8"/>
    </source>
</evidence>
<evidence type="ECO:0000255" key="2">
    <source>
        <dbReference type="PROSITE-ProRule" id="PRU00434"/>
    </source>
</evidence>
<evidence type="ECO:0000305" key="3"/>
<proteinExistence type="inferred from homology"/>
<gene>
    <name evidence="1" type="primary">nikE</name>
    <name type="synonym">oppF2</name>
    <name type="ordered locus">SAV1379</name>
</gene>
<dbReference type="EC" id="7.2.2.11" evidence="1"/>
<dbReference type="EMBL" id="BA000017">
    <property type="protein sequence ID" value="BAB57541.1"/>
    <property type="molecule type" value="Genomic_DNA"/>
</dbReference>
<dbReference type="RefSeq" id="WP_000571259.1">
    <property type="nucleotide sequence ID" value="NC_002758.2"/>
</dbReference>
<dbReference type="SMR" id="Q99UA3"/>
<dbReference type="KEGG" id="sav:SAV1379"/>
<dbReference type="HOGENOM" id="CLU_000604_1_23_9"/>
<dbReference type="PhylomeDB" id="Q99UA3"/>
<dbReference type="Proteomes" id="UP000002481">
    <property type="component" value="Chromosome"/>
</dbReference>
<dbReference type="GO" id="GO:0005886">
    <property type="term" value="C:plasma membrane"/>
    <property type="evidence" value="ECO:0007669"/>
    <property type="project" value="UniProtKB-SubCell"/>
</dbReference>
<dbReference type="GO" id="GO:0015413">
    <property type="term" value="F:ABC-type nickel transporter activity"/>
    <property type="evidence" value="ECO:0007669"/>
    <property type="project" value="UniProtKB-EC"/>
</dbReference>
<dbReference type="GO" id="GO:0005524">
    <property type="term" value="F:ATP binding"/>
    <property type="evidence" value="ECO:0007669"/>
    <property type="project" value="UniProtKB-KW"/>
</dbReference>
<dbReference type="GO" id="GO:0016887">
    <property type="term" value="F:ATP hydrolysis activity"/>
    <property type="evidence" value="ECO:0007669"/>
    <property type="project" value="InterPro"/>
</dbReference>
<dbReference type="CDD" id="cd03257">
    <property type="entry name" value="ABC_NikE_OppD_transporters"/>
    <property type="match status" value="1"/>
</dbReference>
<dbReference type="FunFam" id="3.40.50.300:FF:001829">
    <property type="entry name" value="Nickel import system ATP-binding protein NikE"/>
    <property type="match status" value="1"/>
</dbReference>
<dbReference type="Gene3D" id="3.40.50.300">
    <property type="entry name" value="P-loop containing nucleotide triphosphate hydrolases"/>
    <property type="match status" value="1"/>
</dbReference>
<dbReference type="InterPro" id="IPR003593">
    <property type="entry name" value="AAA+_ATPase"/>
</dbReference>
<dbReference type="InterPro" id="IPR050319">
    <property type="entry name" value="ABC_transp_ATP-bind"/>
</dbReference>
<dbReference type="InterPro" id="IPR003439">
    <property type="entry name" value="ABC_transporter-like_ATP-bd"/>
</dbReference>
<dbReference type="InterPro" id="IPR027417">
    <property type="entry name" value="P-loop_NTPase"/>
</dbReference>
<dbReference type="PANTHER" id="PTHR43776:SF8">
    <property type="entry name" value="ABC TRANSPORTER, ATP-BINDING PROTEIN"/>
    <property type="match status" value="1"/>
</dbReference>
<dbReference type="PANTHER" id="PTHR43776">
    <property type="entry name" value="TRANSPORT ATP-BINDING PROTEIN"/>
    <property type="match status" value="1"/>
</dbReference>
<dbReference type="Pfam" id="PF00005">
    <property type="entry name" value="ABC_tran"/>
    <property type="match status" value="1"/>
</dbReference>
<dbReference type="SMART" id="SM00382">
    <property type="entry name" value="AAA"/>
    <property type="match status" value="1"/>
</dbReference>
<dbReference type="SUPFAM" id="SSF52540">
    <property type="entry name" value="P-loop containing nucleoside triphosphate hydrolases"/>
    <property type="match status" value="1"/>
</dbReference>
<dbReference type="PROSITE" id="PS50893">
    <property type="entry name" value="ABC_TRANSPORTER_2"/>
    <property type="match status" value="1"/>
</dbReference>
<protein>
    <recommendedName>
        <fullName evidence="1">Nickel import system ATP-binding protein NikE</fullName>
        <ecNumber evidence="1">7.2.2.11</ecNumber>
    </recommendedName>
</protein>
<keyword id="KW-0067">ATP-binding</keyword>
<keyword id="KW-1003">Cell membrane</keyword>
<keyword id="KW-0406">Ion transport</keyword>
<keyword id="KW-0472">Membrane</keyword>
<keyword id="KW-0533">Nickel</keyword>
<keyword id="KW-0921">Nickel transport</keyword>
<keyword id="KW-0547">Nucleotide-binding</keyword>
<keyword id="KW-1278">Translocase</keyword>
<keyword id="KW-0813">Transport</keyword>
<reference key="1">
    <citation type="journal article" date="2001" name="Lancet">
        <title>Whole genome sequencing of meticillin-resistant Staphylococcus aureus.</title>
        <authorList>
            <person name="Kuroda M."/>
            <person name="Ohta T."/>
            <person name="Uchiyama I."/>
            <person name="Baba T."/>
            <person name="Yuzawa H."/>
            <person name="Kobayashi I."/>
            <person name="Cui L."/>
            <person name="Oguchi A."/>
            <person name="Aoki K."/>
            <person name="Nagai Y."/>
            <person name="Lian J.-Q."/>
            <person name="Ito T."/>
            <person name="Kanamori M."/>
            <person name="Matsumaru H."/>
            <person name="Maruyama A."/>
            <person name="Murakami H."/>
            <person name="Hosoyama A."/>
            <person name="Mizutani-Ui Y."/>
            <person name="Takahashi N.K."/>
            <person name="Sawano T."/>
            <person name="Inoue R."/>
            <person name="Kaito C."/>
            <person name="Sekimizu K."/>
            <person name="Hirakawa H."/>
            <person name="Kuhara S."/>
            <person name="Goto S."/>
            <person name="Yabuzaki J."/>
            <person name="Kanehisa M."/>
            <person name="Yamashita A."/>
            <person name="Oshima K."/>
            <person name="Furuya K."/>
            <person name="Yoshino C."/>
            <person name="Shiba T."/>
            <person name="Hattori M."/>
            <person name="Ogasawara N."/>
            <person name="Hayashi H."/>
            <person name="Hiramatsu K."/>
        </authorList>
    </citation>
    <scope>NUCLEOTIDE SEQUENCE [LARGE SCALE GENOMIC DNA]</scope>
    <source>
        <strain>Mu50 / ATCC 700699</strain>
    </source>
</reference>
<comment type="function">
    <text evidence="1">Part of the ABC transporter complex NikABCDE (Opp2) involved in nickel import. Probably responsible for energy coupling to the transport system.</text>
</comment>
<comment type="catalytic activity">
    <reaction evidence="1">
        <text>Ni(2+)(out) + ATP + H2O = Ni(2+)(in) + ADP + phosphate + H(+)</text>
        <dbReference type="Rhea" id="RHEA:15557"/>
        <dbReference type="ChEBI" id="CHEBI:15377"/>
        <dbReference type="ChEBI" id="CHEBI:15378"/>
        <dbReference type="ChEBI" id="CHEBI:30616"/>
        <dbReference type="ChEBI" id="CHEBI:43474"/>
        <dbReference type="ChEBI" id="CHEBI:49786"/>
        <dbReference type="ChEBI" id="CHEBI:456216"/>
        <dbReference type="EC" id="7.2.2.11"/>
    </reaction>
    <physiologicalReaction direction="left-to-right" evidence="1">
        <dbReference type="Rhea" id="RHEA:15558"/>
    </physiologicalReaction>
</comment>
<comment type="subunit">
    <text evidence="1">The complex is composed of two ATP-binding proteins (NikD and NikE), two transmembrane proteins (NikB and NikC) and a solute-binding protein (NikA).</text>
</comment>
<comment type="subcellular location">
    <subcellularLocation>
        <location evidence="3">Cell membrane</location>
        <topology evidence="3">Peripheral membrane protein</topology>
    </subcellularLocation>
</comment>
<comment type="similarity">
    <text evidence="3">Belongs to the ABC transporter superfamily.</text>
</comment>
<accession>Q99UA3</accession>
<feature type="chain" id="PRO_0000276805" description="Nickel import system ATP-binding protein NikE">
    <location>
        <begin position="1"/>
        <end position="233"/>
    </location>
</feature>
<feature type="domain" description="ABC transporter" evidence="2">
    <location>
        <begin position="2"/>
        <end position="228"/>
    </location>
</feature>
<feature type="binding site" evidence="2">
    <location>
        <begin position="35"/>
        <end position="42"/>
    </location>
    <ligand>
        <name>ATP</name>
        <dbReference type="ChEBI" id="CHEBI:30616"/>
    </ligand>
</feature>
<sequence>MIELKHVTFGYNKKQMVLQDINITIPDGENVGILGESGCGKSTLASLVLGLFKPVKGEIYLSDNAVLTIFQHPLTSFNPDWTIETSLKEALYYYRGLTDNTAQDQLLLQHLSTFELNAQLLTKLPSEVSGGQLQRFNVMRSLLAQPRVLICDEITSNLDVIAEQNVINILKAQTITNLNHFIVISHDLSVLQRLVNRIIVLKDGMIVDDFAIEELFNVDRHPYTKELVQTFSY</sequence>